<evidence type="ECO:0000250" key="1"/>
<evidence type="ECO:0000256" key="2">
    <source>
        <dbReference type="SAM" id="MobiDB-lite"/>
    </source>
</evidence>
<evidence type="ECO:0000305" key="3"/>
<dbReference type="EMBL" id="BA000004">
    <property type="protein sequence ID" value="BAB05065.1"/>
    <property type="molecule type" value="Genomic_DNA"/>
</dbReference>
<dbReference type="PIR" id="B83818">
    <property type="entry name" value="B83818"/>
</dbReference>
<dbReference type="RefSeq" id="WP_010897512.1">
    <property type="nucleotide sequence ID" value="NC_002570.2"/>
</dbReference>
<dbReference type="SMR" id="Q9KD72"/>
<dbReference type="STRING" id="272558.gene:10727240"/>
<dbReference type="KEGG" id="bha:BH1346"/>
<dbReference type="eggNOG" id="COG0443">
    <property type="taxonomic scope" value="Bacteria"/>
</dbReference>
<dbReference type="HOGENOM" id="CLU_005965_2_1_9"/>
<dbReference type="OrthoDB" id="9766019at2"/>
<dbReference type="Proteomes" id="UP000001258">
    <property type="component" value="Chromosome"/>
</dbReference>
<dbReference type="GO" id="GO:0005524">
    <property type="term" value="F:ATP binding"/>
    <property type="evidence" value="ECO:0007669"/>
    <property type="project" value="UniProtKB-UniRule"/>
</dbReference>
<dbReference type="GO" id="GO:0140662">
    <property type="term" value="F:ATP-dependent protein folding chaperone"/>
    <property type="evidence" value="ECO:0007669"/>
    <property type="project" value="InterPro"/>
</dbReference>
<dbReference type="GO" id="GO:0051082">
    <property type="term" value="F:unfolded protein binding"/>
    <property type="evidence" value="ECO:0007669"/>
    <property type="project" value="InterPro"/>
</dbReference>
<dbReference type="CDD" id="cd10234">
    <property type="entry name" value="ASKHA_NBD_HSP70_DnaK-like"/>
    <property type="match status" value="1"/>
</dbReference>
<dbReference type="FunFam" id="2.60.34.10:FF:000014">
    <property type="entry name" value="Chaperone protein DnaK HSP70"/>
    <property type="match status" value="1"/>
</dbReference>
<dbReference type="FunFam" id="1.20.1270.10:FF:000001">
    <property type="entry name" value="Molecular chaperone DnaK"/>
    <property type="match status" value="1"/>
</dbReference>
<dbReference type="FunFam" id="3.30.420.40:FF:000071">
    <property type="entry name" value="Molecular chaperone DnaK"/>
    <property type="match status" value="1"/>
</dbReference>
<dbReference type="FunFam" id="3.90.640.10:FF:000003">
    <property type="entry name" value="Molecular chaperone DnaK"/>
    <property type="match status" value="1"/>
</dbReference>
<dbReference type="Gene3D" id="1.20.1270.10">
    <property type="match status" value="1"/>
</dbReference>
<dbReference type="Gene3D" id="3.30.420.40">
    <property type="match status" value="2"/>
</dbReference>
<dbReference type="Gene3D" id="3.90.640.10">
    <property type="entry name" value="Actin, Chain A, domain 4"/>
    <property type="match status" value="1"/>
</dbReference>
<dbReference type="Gene3D" id="2.60.34.10">
    <property type="entry name" value="Substrate Binding Domain Of DNAk, Chain A, domain 1"/>
    <property type="match status" value="1"/>
</dbReference>
<dbReference type="HAMAP" id="MF_00332">
    <property type="entry name" value="DnaK"/>
    <property type="match status" value="1"/>
</dbReference>
<dbReference type="InterPro" id="IPR043129">
    <property type="entry name" value="ATPase_NBD"/>
</dbReference>
<dbReference type="InterPro" id="IPR012725">
    <property type="entry name" value="Chaperone_DnaK"/>
</dbReference>
<dbReference type="InterPro" id="IPR018181">
    <property type="entry name" value="Heat_shock_70_CS"/>
</dbReference>
<dbReference type="InterPro" id="IPR029048">
    <property type="entry name" value="HSP70_C_sf"/>
</dbReference>
<dbReference type="InterPro" id="IPR029047">
    <property type="entry name" value="HSP70_peptide-bd_sf"/>
</dbReference>
<dbReference type="InterPro" id="IPR013126">
    <property type="entry name" value="Hsp_70_fam"/>
</dbReference>
<dbReference type="NCBIfam" id="NF001413">
    <property type="entry name" value="PRK00290.1"/>
    <property type="match status" value="1"/>
</dbReference>
<dbReference type="NCBIfam" id="TIGR02350">
    <property type="entry name" value="prok_dnaK"/>
    <property type="match status" value="1"/>
</dbReference>
<dbReference type="PANTHER" id="PTHR19375">
    <property type="entry name" value="HEAT SHOCK PROTEIN 70KDA"/>
    <property type="match status" value="1"/>
</dbReference>
<dbReference type="Pfam" id="PF00012">
    <property type="entry name" value="HSP70"/>
    <property type="match status" value="2"/>
</dbReference>
<dbReference type="PRINTS" id="PR00301">
    <property type="entry name" value="HEATSHOCK70"/>
</dbReference>
<dbReference type="SUPFAM" id="SSF53067">
    <property type="entry name" value="Actin-like ATPase domain"/>
    <property type="match status" value="2"/>
</dbReference>
<dbReference type="SUPFAM" id="SSF100934">
    <property type="entry name" value="Heat shock protein 70kD (HSP70), C-terminal subdomain"/>
    <property type="match status" value="1"/>
</dbReference>
<dbReference type="SUPFAM" id="SSF100920">
    <property type="entry name" value="Heat shock protein 70kD (HSP70), peptide-binding domain"/>
    <property type="match status" value="1"/>
</dbReference>
<dbReference type="PROSITE" id="PS00297">
    <property type="entry name" value="HSP70_1"/>
    <property type="match status" value="1"/>
</dbReference>
<dbReference type="PROSITE" id="PS00329">
    <property type="entry name" value="HSP70_2"/>
    <property type="match status" value="1"/>
</dbReference>
<dbReference type="PROSITE" id="PS01036">
    <property type="entry name" value="HSP70_3"/>
    <property type="match status" value="1"/>
</dbReference>
<feature type="initiator methionine" description="Removed" evidence="1">
    <location>
        <position position="1"/>
    </location>
</feature>
<feature type="chain" id="PRO_0000078416" description="Chaperone protein DnaK">
    <location>
        <begin position="2"/>
        <end position="614"/>
    </location>
</feature>
<feature type="region of interest" description="Disordered" evidence="2">
    <location>
        <begin position="574"/>
        <end position="614"/>
    </location>
</feature>
<feature type="compositionally biased region" description="Low complexity" evidence="2">
    <location>
        <begin position="574"/>
        <end position="583"/>
    </location>
</feature>
<feature type="compositionally biased region" description="Acidic residues" evidence="2">
    <location>
        <begin position="599"/>
        <end position="614"/>
    </location>
</feature>
<feature type="modified residue" description="Phosphothreonine; by autocatalysis" evidence="1">
    <location>
        <position position="172"/>
    </location>
</feature>
<keyword id="KW-0067">ATP-binding</keyword>
<keyword id="KW-0143">Chaperone</keyword>
<keyword id="KW-0547">Nucleotide-binding</keyword>
<keyword id="KW-0597">Phosphoprotein</keyword>
<keyword id="KW-1185">Reference proteome</keyword>
<keyword id="KW-0346">Stress response</keyword>
<reference key="1">
    <citation type="journal article" date="2000" name="Nucleic Acids Res.">
        <title>Complete genome sequence of the alkaliphilic bacterium Bacillus halodurans and genomic sequence comparison with Bacillus subtilis.</title>
        <authorList>
            <person name="Takami H."/>
            <person name="Nakasone K."/>
            <person name="Takaki Y."/>
            <person name="Maeno G."/>
            <person name="Sasaki R."/>
            <person name="Masui N."/>
            <person name="Fuji F."/>
            <person name="Hirama C."/>
            <person name="Nakamura Y."/>
            <person name="Ogasawara N."/>
            <person name="Kuhara S."/>
            <person name="Horikoshi K."/>
        </authorList>
    </citation>
    <scope>NUCLEOTIDE SEQUENCE [LARGE SCALE GENOMIC DNA]</scope>
    <source>
        <strain>ATCC BAA-125 / DSM 18197 / FERM 7344 / JCM 9153 / C-125</strain>
    </source>
</reference>
<protein>
    <recommendedName>
        <fullName>Chaperone protein DnaK</fullName>
    </recommendedName>
    <alternativeName>
        <fullName>HSP70</fullName>
    </alternativeName>
    <alternativeName>
        <fullName>Heat shock 70 kDa protein</fullName>
    </alternativeName>
    <alternativeName>
        <fullName>Heat shock protein 70</fullName>
    </alternativeName>
</protein>
<organism>
    <name type="scientific">Halalkalibacterium halodurans (strain ATCC BAA-125 / DSM 18197 / FERM 7344 / JCM 9153 / C-125)</name>
    <name type="common">Bacillus halodurans</name>
    <dbReference type="NCBI Taxonomy" id="272558"/>
    <lineage>
        <taxon>Bacteria</taxon>
        <taxon>Bacillati</taxon>
        <taxon>Bacillota</taxon>
        <taxon>Bacilli</taxon>
        <taxon>Bacillales</taxon>
        <taxon>Bacillaceae</taxon>
        <taxon>Halalkalibacterium (ex Joshi et al. 2022)</taxon>
    </lineage>
</organism>
<name>DNAK_HALH5</name>
<proteinExistence type="inferred from homology"/>
<sequence>MSKIIGIDLGTTNSCVAVMEGGEATVIPNPEGNRTTPSVVAFKDGERQVGEVAKRQAITNPNTVISIKRHMGTNHKENIEGKEYTPQEISAIILQKLKSDAEAYLGEEVTKAVITVPAYFNDSQRQATKDAGKIAGLEVERIVNEPTAAALAYGLDKEDDQTILVYDLGGGTFDVSILELGDGFFEVKATSGDNKLGGDDFDQVIIDHLIAEFKKENGIDLSQDKMAMQRLKDAAEKAKKDLSGVTSTQISLPFITADATGPKHLELTLTRAKFEELSSHLVERTLGPTRQALQDSGLSASEIDKVVLVGGSTRIPAVQEAIKNLTGKEPHKGVNPDEVVALGAAVQAGVLTGDVKDVVLLDVTPLSLGIETMGGVFTKLIERNTTIPTSKSQIFSTAADNQPSVDIHVLQGEREMAADNKTLGRFQLTDIPPAPRGVPQIEVTFDIDANGIVNVKAKDLGTNKEQSITITSSSGLTDEEIDQMVKDAEANAEADKKRREEVELRNEADQLVFTTEKTLKDLGDNVDEAEKTKAEEAKEKLKKAIEANNIDEIRTAKEELQQVVQALTTKLYEQAAQQAQQAQSAEGDQGTAEKGQDDNVVDADYEEVNEEDKK</sequence>
<comment type="function">
    <text evidence="1">Acts as a chaperone.</text>
</comment>
<comment type="induction">
    <text evidence="1">By stress conditions e.g. heat shock (By similarity).</text>
</comment>
<comment type="similarity">
    <text evidence="3">Belongs to the heat shock protein 70 family.</text>
</comment>
<gene>
    <name type="primary">dnaK</name>
    <name type="ordered locus">BH1346</name>
</gene>
<accession>Q9KD72</accession>